<accession>B1Y8V5</accession>
<evidence type="ECO:0000255" key="1">
    <source>
        <dbReference type="HAMAP-Rule" id="MF_01302"/>
    </source>
</evidence>
<evidence type="ECO:0000305" key="2"/>
<sequence length="130" mass="14829">MVMLDLLSNALIQIKNAEAMGKRQVAIWPVNKLIYYTLRVLQRHGYVGEVEYIDDGRGGKYVVQLLGKINDIGPIKPRYPVKYREIVQWEQKFLPARQIGILVISTNQGVMSHVEAKEKKIGGVLLAYVY</sequence>
<protein>
    <recommendedName>
        <fullName evidence="1">Small ribosomal subunit protein uS8</fullName>
    </recommendedName>
    <alternativeName>
        <fullName evidence="2">30S ribosomal protein S8</fullName>
    </alternativeName>
</protein>
<proteinExistence type="inferred from homology"/>
<comment type="function">
    <text evidence="1">One of the primary rRNA binding proteins, it binds directly to 16S rRNA central domain where it helps coordinate assembly of the platform of the 30S subunit.</text>
</comment>
<comment type="subunit">
    <text evidence="1">Part of the 30S ribosomal subunit.</text>
</comment>
<comment type="similarity">
    <text evidence="1">Belongs to the universal ribosomal protein uS8 family.</text>
</comment>
<dbReference type="EMBL" id="CP001014">
    <property type="protein sequence ID" value="ACB40184.1"/>
    <property type="molecule type" value="Genomic_DNA"/>
</dbReference>
<dbReference type="RefSeq" id="WP_012350603.1">
    <property type="nucleotide sequence ID" value="NC_010525.1"/>
</dbReference>
<dbReference type="SMR" id="B1Y8V5"/>
<dbReference type="STRING" id="444157.Tneu_1257"/>
<dbReference type="GeneID" id="6165865"/>
<dbReference type="KEGG" id="tne:Tneu_1257"/>
<dbReference type="eggNOG" id="arCOG04091">
    <property type="taxonomic scope" value="Archaea"/>
</dbReference>
<dbReference type="HOGENOM" id="CLU_098428_1_1_2"/>
<dbReference type="OrthoDB" id="5670at2157"/>
<dbReference type="Proteomes" id="UP000001694">
    <property type="component" value="Chromosome"/>
</dbReference>
<dbReference type="GO" id="GO:1990904">
    <property type="term" value="C:ribonucleoprotein complex"/>
    <property type="evidence" value="ECO:0007669"/>
    <property type="project" value="UniProtKB-KW"/>
</dbReference>
<dbReference type="GO" id="GO:0005840">
    <property type="term" value="C:ribosome"/>
    <property type="evidence" value="ECO:0007669"/>
    <property type="project" value="UniProtKB-KW"/>
</dbReference>
<dbReference type="GO" id="GO:0019843">
    <property type="term" value="F:rRNA binding"/>
    <property type="evidence" value="ECO:0007669"/>
    <property type="project" value="UniProtKB-UniRule"/>
</dbReference>
<dbReference type="GO" id="GO:0003735">
    <property type="term" value="F:structural constituent of ribosome"/>
    <property type="evidence" value="ECO:0007669"/>
    <property type="project" value="InterPro"/>
</dbReference>
<dbReference type="GO" id="GO:0006412">
    <property type="term" value="P:translation"/>
    <property type="evidence" value="ECO:0007669"/>
    <property type="project" value="UniProtKB-UniRule"/>
</dbReference>
<dbReference type="FunFam" id="3.30.1370.30:FF:000001">
    <property type="entry name" value="40S ribosomal protein S15a"/>
    <property type="match status" value="1"/>
</dbReference>
<dbReference type="FunFam" id="3.30.1490.10:FF:000002">
    <property type="entry name" value="40S ribosomal protein S15a"/>
    <property type="match status" value="1"/>
</dbReference>
<dbReference type="Gene3D" id="3.30.1370.30">
    <property type="match status" value="1"/>
</dbReference>
<dbReference type="Gene3D" id="3.30.1490.10">
    <property type="match status" value="1"/>
</dbReference>
<dbReference type="HAMAP" id="MF_01302_A">
    <property type="entry name" value="Ribosomal_uS8_A"/>
    <property type="match status" value="1"/>
</dbReference>
<dbReference type="InterPro" id="IPR000630">
    <property type="entry name" value="Ribosomal_uS8"/>
</dbReference>
<dbReference type="InterPro" id="IPR047863">
    <property type="entry name" value="Ribosomal_uS8_CS"/>
</dbReference>
<dbReference type="InterPro" id="IPR035987">
    <property type="entry name" value="Ribosomal_uS8_sf"/>
</dbReference>
<dbReference type="NCBIfam" id="NF003115">
    <property type="entry name" value="PRK04034.1"/>
    <property type="match status" value="1"/>
</dbReference>
<dbReference type="PANTHER" id="PTHR11758">
    <property type="entry name" value="40S RIBOSOMAL PROTEIN S15A"/>
    <property type="match status" value="1"/>
</dbReference>
<dbReference type="Pfam" id="PF00410">
    <property type="entry name" value="Ribosomal_S8"/>
    <property type="match status" value="1"/>
</dbReference>
<dbReference type="SUPFAM" id="SSF56047">
    <property type="entry name" value="Ribosomal protein S8"/>
    <property type="match status" value="1"/>
</dbReference>
<dbReference type="PROSITE" id="PS00053">
    <property type="entry name" value="RIBOSOMAL_S8"/>
    <property type="match status" value="1"/>
</dbReference>
<name>RS8_PYRNV</name>
<keyword id="KW-0687">Ribonucleoprotein</keyword>
<keyword id="KW-0689">Ribosomal protein</keyword>
<keyword id="KW-0694">RNA-binding</keyword>
<keyword id="KW-0699">rRNA-binding</keyword>
<organism>
    <name type="scientific">Pyrobaculum neutrophilum (strain DSM 2338 / JCM 9278 / NBRC 100436 / V24Sta)</name>
    <name type="common">Thermoproteus neutrophilus</name>
    <dbReference type="NCBI Taxonomy" id="444157"/>
    <lineage>
        <taxon>Archaea</taxon>
        <taxon>Thermoproteota</taxon>
        <taxon>Thermoprotei</taxon>
        <taxon>Thermoproteales</taxon>
        <taxon>Thermoproteaceae</taxon>
        <taxon>Pyrobaculum</taxon>
    </lineage>
</organism>
<gene>
    <name evidence="1" type="primary">rps8</name>
    <name type="ordered locus">Tneu_1257</name>
</gene>
<reference key="1">
    <citation type="submission" date="2008-03" db="EMBL/GenBank/DDBJ databases">
        <title>Complete sequence of Thermoproteus neutrophilus V24Sta.</title>
        <authorList>
            <consortium name="US DOE Joint Genome Institute"/>
            <person name="Copeland A."/>
            <person name="Lucas S."/>
            <person name="Lapidus A."/>
            <person name="Glavina del Rio T."/>
            <person name="Dalin E."/>
            <person name="Tice H."/>
            <person name="Bruce D."/>
            <person name="Goodwin L."/>
            <person name="Pitluck S."/>
            <person name="Sims D."/>
            <person name="Brettin T."/>
            <person name="Detter J.C."/>
            <person name="Han C."/>
            <person name="Kuske C.R."/>
            <person name="Schmutz J."/>
            <person name="Larimer F."/>
            <person name="Land M."/>
            <person name="Hauser L."/>
            <person name="Kyrpides N."/>
            <person name="Mikhailova N."/>
            <person name="Biddle J.F."/>
            <person name="Zhang Z."/>
            <person name="Fitz-Gibbon S.T."/>
            <person name="Lowe T.M."/>
            <person name="Saltikov C."/>
            <person name="House C.H."/>
            <person name="Richardson P."/>
        </authorList>
    </citation>
    <scope>NUCLEOTIDE SEQUENCE [LARGE SCALE GENOMIC DNA]</scope>
    <source>
        <strain>DSM 2338 / JCM 9278 / NBRC 100436 / V24Sta</strain>
    </source>
</reference>
<feature type="chain" id="PRO_1000140626" description="Small ribosomal subunit protein uS8">
    <location>
        <begin position="1"/>
        <end position="130"/>
    </location>
</feature>